<organismHost>
    <name type="scientific">Sus scrofa</name>
    <name type="common">Pig</name>
    <dbReference type="NCBI Taxonomy" id="9823"/>
</organismHost>
<accession>P09366</accession>
<reference key="1">
    <citation type="journal article" date="1988" name="Nucleic Acids Res.">
        <title>Nucleotide sequence of porcine rotavirus (OSU strain) gene segments 7, 8, and 9.</title>
        <authorList>
            <person name="Rushlow K."/>
            <person name="McNab A."/>
            <person name="Olson K."/>
            <person name="Maxwell F."/>
            <person name="Maxwell I."/>
            <person name="Stiegler G."/>
        </authorList>
    </citation>
    <scope>NUCLEOTIDE SEQUENCE [MRNA]</scope>
</reference>
<organism>
    <name type="scientific">Rotavirus A (strain RVA/Pig/United States/OSU/1977/G5P9[7])</name>
    <name type="common">RV-A</name>
    <name type="synonym">Rotavirus A (strain Ohio State University)</name>
    <dbReference type="NCBI Taxonomy" id="10915"/>
    <lineage>
        <taxon>Viruses</taxon>
        <taxon>Riboviria</taxon>
        <taxon>Orthornavirae</taxon>
        <taxon>Duplornaviricota</taxon>
        <taxon>Resentoviricetes</taxon>
        <taxon>Reovirales</taxon>
        <taxon>Sedoreoviridae</taxon>
        <taxon>Rotavirus</taxon>
        <taxon>Rotavirus A</taxon>
    </lineage>
</organism>
<proteinExistence type="evidence at transcript level"/>
<dbReference type="EC" id="3.6.4.-" evidence="1"/>
<dbReference type="EMBL" id="X06722">
    <property type="protein sequence ID" value="CAA29902.1"/>
    <property type="molecule type" value="mRNA"/>
</dbReference>
<dbReference type="PIR" id="S01747">
    <property type="entry name" value="WMXR5U"/>
</dbReference>
<dbReference type="SMR" id="P09366"/>
<dbReference type="GO" id="GO:0030430">
    <property type="term" value="C:host cell cytoplasm"/>
    <property type="evidence" value="ECO:0007669"/>
    <property type="project" value="UniProtKB-SubCell"/>
</dbReference>
<dbReference type="GO" id="GO:0005524">
    <property type="term" value="F:ATP binding"/>
    <property type="evidence" value="ECO:0007669"/>
    <property type="project" value="UniProtKB-KW"/>
</dbReference>
<dbReference type="GO" id="GO:0046872">
    <property type="term" value="F:metal ion binding"/>
    <property type="evidence" value="ECO:0007669"/>
    <property type="project" value="UniProtKB-UniRule"/>
</dbReference>
<dbReference type="GO" id="GO:0004550">
    <property type="term" value="F:nucleoside diphosphate kinase activity"/>
    <property type="evidence" value="ECO:0007669"/>
    <property type="project" value="InterPro"/>
</dbReference>
<dbReference type="GO" id="GO:0017111">
    <property type="term" value="F:ribonucleoside triphosphate phosphatase activity"/>
    <property type="evidence" value="ECO:0007669"/>
    <property type="project" value="InterPro"/>
</dbReference>
<dbReference type="GO" id="GO:0003723">
    <property type="term" value="F:RNA binding"/>
    <property type="evidence" value="ECO:0007669"/>
    <property type="project" value="UniProtKB-UniRule"/>
</dbReference>
<dbReference type="GO" id="GO:0019079">
    <property type="term" value="P:viral genome replication"/>
    <property type="evidence" value="ECO:0007669"/>
    <property type="project" value="UniProtKB-UniRule"/>
</dbReference>
<dbReference type="Gene3D" id="3.30.428.20">
    <property type="entry name" value="Rotavirus NSP2 fragment, C-terminal domain"/>
    <property type="match status" value="1"/>
</dbReference>
<dbReference type="Gene3D" id="3.90.1400.10">
    <property type="entry name" value="Rotavirus NSP2 fragment, N-terminal domain"/>
    <property type="match status" value="1"/>
</dbReference>
<dbReference type="HAMAP" id="MF_04089">
    <property type="entry name" value="ROTA_NSP2"/>
    <property type="match status" value="1"/>
</dbReference>
<dbReference type="InterPro" id="IPR048306">
    <property type="entry name" value="Rota_NS35_C"/>
</dbReference>
<dbReference type="InterPro" id="IPR048573">
    <property type="entry name" value="Rota_NS35_N"/>
</dbReference>
<dbReference type="InterPro" id="IPR003668">
    <property type="entry name" value="Rotavirus_NSP2"/>
</dbReference>
<dbReference type="InterPro" id="IPR024076">
    <property type="entry name" value="Rotavirus_NSP2_C"/>
</dbReference>
<dbReference type="InterPro" id="IPR024068">
    <property type="entry name" value="Rotavirus_NSP2_N"/>
</dbReference>
<dbReference type="Pfam" id="PF02509">
    <property type="entry name" value="Rota_NS35_C"/>
    <property type="match status" value="1"/>
</dbReference>
<dbReference type="Pfam" id="PF21067">
    <property type="entry name" value="Rota_NS35_N"/>
    <property type="match status" value="1"/>
</dbReference>
<dbReference type="SUPFAM" id="SSF75347">
    <property type="entry name" value="Rotavirus NSP2 fragment, C-terminal domain"/>
    <property type="match status" value="1"/>
</dbReference>
<dbReference type="SUPFAM" id="SSF75574">
    <property type="entry name" value="Rotavirus NSP2 fragment, N-terminal domain"/>
    <property type="match status" value="1"/>
</dbReference>
<feature type="chain" id="PRO_0000149549" description="Non-structural protein 2">
    <location>
        <begin position="1"/>
        <end position="317"/>
    </location>
</feature>
<feature type="region of interest" description="RNA-binding" evidence="1">
    <location>
        <begin position="205"/>
        <end position="241"/>
    </location>
</feature>
<feature type="active site" description="For NTPase and RTPase activities" evidence="1">
    <location>
        <position position="225"/>
    </location>
</feature>
<feature type="binding site" evidence="1">
    <location>
        <begin position="107"/>
        <end position="109"/>
    </location>
    <ligand>
        <name>ATP</name>
        <dbReference type="ChEBI" id="CHEBI:30616"/>
    </ligand>
</feature>
<feature type="binding site" evidence="1">
    <location>
        <position position="188"/>
    </location>
    <ligand>
        <name>ATP</name>
        <dbReference type="ChEBI" id="CHEBI:30616"/>
    </ligand>
</feature>
<feature type="binding site" evidence="1">
    <location>
        <begin position="221"/>
        <end position="223"/>
    </location>
    <ligand>
        <name>ATP</name>
        <dbReference type="ChEBI" id="CHEBI:30616"/>
    </ligand>
</feature>
<feature type="binding site" evidence="1">
    <location>
        <position position="227"/>
    </location>
    <ligand>
        <name>ATP</name>
        <dbReference type="ChEBI" id="CHEBI:30616"/>
    </ligand>
</feature>
<keyword id="KW-0067">ATP-binding</keyword>
<keyword id="KW-1035">Host cytoplasm</keyword>
<keyword id="KW-0378">Hydrolase</keyword>
<keyword id="KW-0460">Magnesium</keyword>
<keyword id="KW-0479">Metal-binding</keyword>
<keyword id="KW-0547">Nucleotide-binding</keyword>
<keyword id="KW-0694">RNA-binding</keyword>
<protein>
    <recommendedName>
        <fullName evidence="1">Non-structural protein 2</fullName>
        <shortName evidence="1">NSP2</shortName>
        <ecNumber evidence="1">3.6.4.-</ecNumber>
    </recommendedName>
    <alternativeName>
        <fullName evidence="1">NCVP3</fullName>
    </alternativeName>
    <alternativeName>
        <fullName evidence="1">Non-structural RNA-binding protein 35</fullName>
        <shortName evidence="1">NS35</shortName>
    </alternativeName>
</protein>
<sequence length="317" mass="36456">MAELACFCYPHLEKDSYKFIPFNSLAIKCMLTAKVDKKDQDKFYNSIVYGIAPPPQFKKRYNTNDNSRGMNFETSMFNKVAILICEALNSIKVTQSDVANVLSRVVSVRHLENLVLRKENHQDVLFHSKELLLKAVLIAIGQSKEIETTATAEGGEIVFQNAAFTMWKLTYLDHKLMPILDQNFIEYKITLNEDKPISDACVKELVAELRWQYNRFAVITHGKGHYRVVKYSSVANHADRVFATYKNNAKSGNVTDFNLLDQRIIWQNWYAFTSSMKQGNTLDVCKKLLFQKMKQEKNPFKGLSTDRKMDEVSHVGI</sequence>
<evidence type="ECO:0000255" key="1">
    <source>
        <dbReference type="HAMAP-Rule" id="MF_04089"/>
    </source>
</evidence>
<name>NSP2_ROTP5</name>
<comment type="function">
    <text evidence="1">Participates in replication and packaging of the viral genome. Plays a crucial role, together with NSP5, in the formation of virus factories (viroplasms), which are large inclusions in the host cytoplasm where replication intermediates are assembled and viral RNA replication takes place. Displays ssRNA binding, NTPase, RNA triphosphatase (RTPase) and ATP-independent helix-unwinding activities. The unwinding activity may prepare and organize plus-strand RNAs for packaging and replication by removing interfering secondary structures. The RTPase activity plays a role in the removal of the gamma-phosphate from the rotavirus RNA minus strands of dsRNA genome segments. Participates in the selective exclusion of host proteins from stress granules (SG) and P bodies (PB). Also participates in the sequestration of these remodeled organelles in viral factories.</text>
</comment>
<comment type="cofactor">
    <cofactor evidence="1">
        <name>Mg(2+)</name>
        <dbReference type="ChEBI" id="CHEBI:18420"/>
    </cofactor>
</comment>
<comment type="subunit">
    <text evidence="1">Homooctamer. Interacts with VP1; this interaction is weak. Interacts with NSP5; this interaction leads to up-regulation of NSP5 phosphorylation and formation of viral factories. Interacts with host DCP1A, DCP1B, DDX6, EDC4 and EIF2S1/eIF2-alpha; these interactions are probably part of the sequestration of some host SGs and PBs proteins in viral factories.</text>
</comment>
<comment type="subcellular location">
    <subcellularLocation>
        <location evidence="1">Host cytoplasm</location>
    </subcellularLocation>
    <text evidence="1">Found in spherical cytoplasmic structures, called viral factories, that appear early after infection and are the site of viral replication and packaging.</text>
</comment>
<comment type="similarity">
    <text evidence="1">Belongs to the rotavirus NSP2 family.</text>
</comment>